<proteinExistence type="predicted"/>
<dbReference type="EMBL" id="AL136001">
    <property type="status" value="NOT_ANNOTATED_CDS"/>
    <property type="molecule type" value="Genomic_DNA"/>
</dbReference>
<dbReference type="CCDS" id="CCDS58338.1"/>
<dbReference type="RefSeq" id="NP_001244197.1">
    <property type="nucleotide sequence ID" value="NM_001257268.2"/>
</dbReference>
<dbReference type="SMR" id="P0DJH9"/>
<dbReference type="BioGRID" id="572061">
    <property type="interactions" value="1"/>
</dbReference>
<dbReference type="IntAct" id="P0DJH9">
    <property type="interactions" value="1"/>
</dbReference>
<dbReference type="STRING" id="9606.ENSP00000455434"/>
<dbReference type="iPTMnet" id="P0DJH9"/>
<dbReference type="PhosphoSitePlus" id="P0DJH9"/>
<dbReference type="BioMuta" id="RD3L"/>
<dbReference type="DMDM" id="387935359"/>
<dbReference type="MassIVE" id="P0DJH9"/>
<dbReference type="PaxDb" id="9606-ENSP00000455434"/>
<dbReference type="ProteomicsDB" id="52548"/>
<dbReference type="Antibodypedia" id="71885">
    <property type="antibodies" value="5 antibodies from 5 providers"/>
</dbReference>
<dbReference type="DNASU" id="647286"/>
<dbReference type="Ensembl" id="ENST00000557640.2">
    <property type="protein sequence ID" value="ENSP00000455434.1"/>
    <property type="gene ID" value="ENSG00000227729.5"/>
</dbReference>
<dbReference type="GeneID" id="647286"/>
<dbReference type="KEGG" id="hsa:647286"/>
<dbReference type="MANE-Select" id="ENST00000557640.2">
    <property type="protein sequence ID" value="ENSP00000455434.1"/>
    <property type="RefSeq nucleotide sequence ID" value="NM_001257268.2"/>
    <property type="RefSeq protein sequence ID" value="NP_001244197.1"/>
</dbReference>
<dbReference type="UCSC" id="uc031qqp.1">
    <property type="organism name" value="human"/>
</dbReference>
<dbReference type="AGR" id="HGNC:40912"/>
<dbReference type="CTD" id="647286"/>
<dbReference type="DisGeNET" id="647286"/>
<dbReference type="GeneCards" id="RD3L"/>
<dbReference type="HGNC" id="HGNC:40912">
    <property type="gene designation" value="RD3L"/>
</dbReference>
<dbReference type="HPA" id="ENSG00000227729">
    <property type="expression patterns" value="Group enriched (heart muscle, retina)"/>
</dbReference>
<dbReference type="neXtProt" id="NX_P0DJH9"/>
<dbReference type="VEuPathDB" id="HostDB:ENSG00000227729"/>
<dbReference type="eggNOG" id="ENOG502QVRA">
    <property type="taxonomic scope" value="Eukaryota"/>
</dbReference>
<dbReference type="GeneTree" id="ENSGT00390000002089"/>
<dbReference type="HOGENOM" id="CLU_113153_0_0_1"/>
<dbReference type="InParanoid" id="P0DJH9"/>
<dbReference type="OMA" id="WMKWPKS"/>
<dbReference type="OrthoDB" id="9944259at2759"/>
<dbReference type="PAN-GO" id="P0DJH9">
    <property type="GO annotations" value="0 GO annotations based on evolutionary models"/>
</dbReference>
<dbReference type="PhylomeDB" id="P0DJH9"/>
<dbReference type="TreeFam" id="TF331573"/>
<dbReference type="PathwayCommons" id="P0DJH9"/>
<dbReference type="SignaLink" id="P0DJH9"/>
<dbReference type="BioGRID-ORCS" id="647286">
    <property type="hits" value="10 hits in 1137 CRISPR screens"/>
</dbReference>
<dbReference type="GenomeRNAi" id="647286"/>
<dbReference type="Pharos" id="P0DJH9">
    <property type="development level" value="Tdark"/>
</dbReference>
<dbReference type="PRO" id="PR:P0DJH9"/>
<dbReference type="Proteomes" id="UP000005640">
    <property type="component" value="Chromosome 14"/>
</dbReference>
<dbReference type="RNAct" id="P0DJH9">
    <property type="molecule type" value="protein"/>
</dbReference>
<dbReference type="Bgee" id="ENSG00000227729">
    <property type="expression patterns" value="Expressed in apex of heart and 20 other cell types or tissues"/>
</dbReference>
<dbReference type="InterPro" id="IPR028092">
    <property type="entry name" value="RD3"/>
</dbReference>
<dbReference type="PANTHER" id="PTHR28489:SF3">
    <property type="entry name" value="PROTEIN RD3-LIKE"/>
    <property type="match status" value="1"/>
</dbReference>
<dbReference type="PANTHER" id="PTHR28489">
    <property type="entry name" value="RENTINAL DEGENERATION 3-LIKE"/>
    <property type="match status" value="1"/>
</dbReference>
<dbReference type="Pfam" id="PF14473">
    <property type="entry name" value="RD3"/>
    <property type="match status" value="1"/>
</dbReference>
<evidence type="ECO:0000255" key="1"/>
<evidence type="ECO:0000256" key="2">
    <source>
        <dbReference type="SAM" id="MobiDB-lite"/>
    </source>
</evidence>
<name>RD3L_HUMAN</name>
<protein>
    <recommendedName>
        <fullName>Protein RD3-like</fullName>
    </recommendedName>
    <alternativeName>
        <fullName>Retinal degeneration protein 3-like</fullName>
    </alternativeName>
</protein>
<sequence length="198" mass="23209">MPLFGWMKWPKNDSYKPTHYPGSDIVTKTLLRELKWHLKERERLIQEIENEQKVKKTGVDYNWLRNYQNPHTTIPVTEQRQLEVLCSQVQPCQTGTILSRFREVLAENDVLPWEIVYIFKQVLKDFLSSSDRGSEQEDLEDSGSMDCSAPSVIQGDSSKRADKDEIPTISSYVDKNTKDRFPVFSHRIWNLPYYHPSS</sequence>
<gene>
    <name type="primary">RD3L</name>
</gene>
<reference key="1">
    <citation type="journal article" date="2003" name="Nature">
        <title>The DNA sequence and analysis of human chromosome 14.</title>
        <authorList>
            <person name="Heilig R."/>
            <person name="Eckenberg R."/>
            <person name="Petit J.-L."/>
            <person name="Fonknechten N."/>
            <person name="Da Silva C."/>
            <person name="Cattolico L."/>
            <person name="Levy M."/>
            <person name="Barbe V."/>
            <person name="De Berardinis V."/>
            <person name="Ureta-Vidal A."/>
            <person name="Pelletier E."/>
            <person name="Vico V."/>
            <person name="Anthouard V."/>
            <person name="Rowen L."/>
            <person name="Madan A."/>
            <person name="Qin S."/>
            <person name="Sun H."/>
            <person name="Du H."/>
            <person name="Pepin K."/>
            <person name="Artiguenave F."/>
            <person name="Robert C."/>
            <person name="Cruaud C."/>
            <person name="Bruels T."/>
            <person name="Jaillon O."/>
            <person name="Friedlander L."/>
            <person name="Samson G."/>
            <person name="Brottier P."/>
            <person name="Cure S."/>
            <person name="Segurens B."/>
            <person name="Aniere F."/>
            <person name="Samain S."/>
            <person name="Crespeau H."/>
            <person name="Abbasi N."/>
            <person name="Aiach N."/>
            <person name="Boscus D."/>
            <person name="Dickhoff R."/>
            <person name="Dors M."/>
            <person name="Dubois I."/>
            <person name="Friedman C."/>
            <person name="Gouyvenoux M."/>
            <person name="James R."/>
            <person name="Madan A."/>
            <person name="Mairey-Estrada B."/>
            <person name="Mangenot S."/>
            <person name="Martins N."/>
            <person name="Menard M."/>
            <person name="Oztas S."/>
            <person name="Ratcliffe A."/>
            <person name="Shaffer T."/>
            <person name="Trask B."/>
            <person name="Vacherie B."/>
            <person name="Bellemere C."/>
            <person name="Belser C."/>
            <person name="Besnard-Gonnet M."/>
            <person name="Bartol-Mavel D."/>
            <person name="Boutard M."/>
            <person name="Briez-Silla S."/>
            <person name="Combette S."/>
            <person name="Dufosse-Laurent V."/>
            <person name="Ferron C."/>
            <person name="Lechaplais C."/>
            <person name="Louesse C."/>
            <person name="Muselet D."/>
            <person name="Magdelenat G."/>
            <person name="Pateau E."/>
            <person name="Petit E."/>
            <person name="Sirvain-Trukniewicz P."/>
            <person name="Trybou A."/>
            <person name="Vega-Czarny N."/>
            <person name="Bataille E."/>
            <person name="Bluet E."/>
            <person name="Bordelais I."/>
            <person name="Dubois M."/>
            <person name="Dumont C."/>
            <person name="Guerin T."/>
            <person name="Haffray S."/>
            <person name="Hammadi R."/>
            <person name="Muanga J."/>
            <person name="Pellouin V."/>
            <person name="Robert D."/>
            <person name="Wunderle E."/>
            <person name="Gauguet G."/>
            <person name="Roy A."/>
            <person name="Sainte-Marthe L."/>
            <person name="Verdier J."/>
            <person name="Verdier-Discala C."/>
            <person name="Hillier L.W."/>
            <person name="Fulton L."/>
            <person name="McPherson J."/>
            <person name="Matsuda F."/>
            <person name="Wilson R."/>
            <person name="Scarpelli C."/>
            <person name="Gyapay G."/>
            <person name="Wincker P."/>
            <person name="Saurin W."/>
            <person name="Quetier F."/>
            <person name="Waterston R."/>
            <person name="Hood L."/>
            <person name="Weissenbach J."/>
        </authorList>
    </citation>
    <scope>NUCLEOTIDE SEQUENCE [LARGE SCALE GENOMIC DNA]</scope>
</reference>
<accession>P0DJH9</accession>
<keyword id="KW-0175">Coiled coil</keyword>
<keyword id="KW-1185">Reference proteome</keyword>
<feature type="chain" id="PRO_0000417456" description="Protein RD3-like">
    <location>
        <begin position="1"/>
        <end position="198"/>
    </location>
</feature>
<feature type="region of interest" description="Disordered" evidence="2">
    <location>
        <begin position="133"/>
        <end position="168"/>
    </location>
</feature>
<feature type="coiled-coil region" evidence="1">
    <location>
        <begin position="28"/>
        <end position="57"/>
    </location>
</feature>
<feature type="compositionally biased region" description="Basic and acidic residues" evidence="2">
    <location>
        <begin position="157"/>
        <end position="166"/>
    </location>
</feature>
<organism>
    <name type="scientific">Homo sapiens</name>
    <name type="common">Human</name>
    <dbReference type="NCBI Taxonomy" id="9606"/>
    <lineage>
        <taxon>Eukaryota</taxon>
        <taxon>Metazoa</taxon>
        <taxon>Chordata</taxon>
        <taxon>Craniata</taxon>
        <taxon>Vertebrata</taxon>
        <taxon>Euteleostomi</taxon>
        <taxon>Mammalia</taxon>
        <taxon>Eutheria</taxon>
        <taxon>Euarchontoglires</taxon>
        <taxon>Primates</taxon>
        <taxon>Haplorrhini</taxon>
        <taxon>Catarrhini</taxon>
        <taxon>Hominidae</taxon>
        <taxon>Homo</taxon>
    </lineage>
</organism>